<feature type="chain" id="PRO_0000454542" description="RNA-binding protein KhpB">
    <location>
        <begin position="1"/>
        <end position="322"/>
    </location>
</feature>
<feature type="domain" description="KH" evidence="2">
    <location>
        <begin position="174"/>
        <end position="251"/>
    </location>
</feature>
<feature type="domain" description="R3H" evidence="2">
    <location>
        <begin position="256"/>
        <end position="322"/>
    </location>
</feature>
<feature type="region of interest" description="Jag_N domain" evidence="2">
    <location>
        <begin position="3"/>
        <end position="52"/>
    </location>
</feature>
<feature type="region of interest" description="Disordered" evidence="3">
    <location>
        <begin position="58"/>
        <end position="162"/>
    </location>
</feature>
<feature type="compositionally biased region" description="Low complexity" evidence="3">
    <location>
        <begin position="58"/>
        <end position="82"/>
    </location>
</feature>
<feature type="compositionally biased region" description="Polar residues" evidence="3">
    <location>
        <begin position="89"/>
        <end position="99"/>
    </location>
</feature>
<feature type="compositionally biased region" description="Low complexity" evidence="3">
    <location>
        <begin position="100"/>
        <end position="129"/>
    </location>
</feature>
<feature type="compositionally biased region" description="Polar residues" evidence="3">
    <location>
        <begin position="141"/>
        <end position="161"/>
    </location>
</feature>
<feature type="modified residue" description="Phosphothreonine" evidence="1">
    <location>
        <position position="89"/>
    </location>
</feature>
<protein>
    <recommendedName>
        <fullName evidence="2">RNA-binding protein KhpB</fullName>
    </recommendedName>
    <alternativeName>
        <fullName evidence="2 5">RNA-binding protein EloR</fullName>
    </alternativeName>
    <alternativeName>
        <fullName evidence="7">Single stranded DNA-binding protein</fullName>
    </alternativeName>
</protein>
<gene>
    <name evidence="2" type="primary">khpB</name>
    <name evidence="2 5" type="synonym">eloR</name>
    <name type="ordered locus">lp_3683</name>
</gene>
<comment type="function">
    <text evidence="2">A probable RNA chaperone. Forms a complex with KhpA which binds to cellular RNA and controls its expression. Plays a role in peptidoglycan (PG) homeostasis and cell length regulation.</text>
</comment>
<comment type="function">
    <text evidence="4">Necessary for correct cell elongation.</text>
</comment>
<comment type="subunit">
    <text evidence="2 6">Forms a complex with KhpA.</text>
</comment>
<comment type="subcellular location">
    <subcellularLocation>
        <location evidence="2">Cytoplasm</location>
    </subcellularLocation>
</comment>
<comment type="domain">
    <text evidence="2">Has an N-terminal Jag-N domain, a linker with a phosphorylated Thr, and 2 RNA-binding domains (KH and R3H).</text>
</comment>
<comment type="disruption phenotype">
    <text evidence="4">Cell length is reduced.</text>
</comment>
<reference key="1">
    <citation type="journal article" date="2003" name="Proc. Natl. Acad. Sci. U.S.A.">
        <title>Complete genome sequence of Lactobacillus plantarum WCFS1.</title>
        <authorList>
            <person name="Kleerebezem M."/>
            <person name="Boekhorst J."/>
            <person name="van Kranenburg R."/>
            <person name="Molenaar D."/>
            <person name="Kuipers O.P."/>
            <person name="Leer R."/>
            <person name="Tarchini R."/>
            <person name="Peters S.A."/>
            <person name="Sandbrink H.M."/>
            <person name="Fiers M.W.E.J."/>
            <person name="Stiekema W."/>
            <person name="Klein Lankhorst R.M."/>
            <person name="Bron P.A."/>
            <person name="Hoffer S.M."/>
            <person name="Nierop Groot M.N."/>
            <person name="Kerkhoven R."/>
            <person name="De Vries M."/>
            <person name="Ursing B."/>
            <person name="De Vos W.M."/>
            <person name="Siezen R.J."/>
        </authorList>
    </citation>
    <scope>NUCLEOTIDE SEQUENCE [LARGE SCALE GENOMIC DNA]</scope>
    <source>
        <strain>ATCC BAA-793 / NCIMB 8826 / WCFS1</strain>
    </source>
</reference>
<reference key="2">
    <citation type="journal article" date="2012" name="J. Bacteriol.">
        <title>Complete resequencing and reannotation of the Lactobacillus plantarum WCFS1 genome.</title>
        <authorList>
            <person name="Siezen R.J."/>
            <person name="Francke C."/>
            <person name="Renckens B."/>
            <person name="Boekhorst J."/>
            <person name="Wels M."/>
            <person name="Kleerebezem M."/>
            <person name="van Hijum S.A."/>
        </authorList>
    </citation>
    <scope>NUCLEOTIDE SEQUENCE [LARGE SCALE GENOMIC DNA]</scope>
    <scope>GENOME REANNOTATION</scope>
    <source>
        <strain>ATCC BAA-793 / NCIMB 8826 / WCFS1</strain>
    </source>
</reference>
<reference key="3">
    <citation type="journal article" date="2019" name="MSphere">
        <title>CRISPR Interference for Rapid Knockdown of Essential Cell Cycle Genes in Lactobacillus plantarum.</title>
        <authorList>
            <person name="Myrbraaten I.S."/>
            <person name="Wiull K."/>
            <person name="Salehian Z."/>
            <person name="Haavarstein L.S."/>
            <person name="Straume D."/>
            <person name="Mathiesen G."/>
            <person name="Kjos M."/>
        </authorList>
    </citation>
    <scope>FUNCTION</scope>
    <scope>PROBABLE SUBUNIT</scope>
    <scope>DISRUPTION PHENOTYPE</scope>
    <source>
        <strain>ATCC BAA-793 / NCIMB 8826 / WCFS1</strain>
    </source>
</reference>
<accession>F9ULM5</accession>
<proteinExistence type="evidence at protein level"/>
<keyword id="KW-0133">Cell shape</keyword>
<keyword id="KW-0961">Cell wall biogenesis/degradation</keyword>
<keyword id="KW-0143">Chaperone</keyword>
<keyword id="KW-0963">Cytoplasm</keyword>
<keyword id="KW-0597">Phosphoprotein</keyword>
<keyword id="KW-1185">Reference proteome</keyword>
<keyword id="KW-0694">RNA-binding</keyword>
<evidence type="ECO:0000250" key="1">
    <source>
        <dbReference type="UniProtKB" id="Q8CY87"/>
    </source>
</evidence>
<evidence type="ECO:0000255" key="2">
    <source>
        <dbReference type="HAMAP-Rule" id="MF_00867"/>
    </source>
</evidence>
<evidence type="ECO:0000256" key="3">
    <source>
        <dbReference type="SAM" id="MobiDB-lite"/>
    </source>
</evidence>
<evidence type="ECO:0000269" key="4">
    <source>
    </source>
</evidence>
<evidence type="ECO:0000303" key="5">
    <source>
    </source>
</evidence>
<evidence type="ECO:0000305" key="6">
    <source>
    </source>
</evidence>
<evidence type="ECO:0000312" key="7">
    <source>
        <dbReference type="EMBL" id="CCC80632.1"/>
    </source>
</evidence>
<name>KHPB_LACPL</name>
<organism>
    <name type="scientific">Lactiplantibacillus plantarum (strain ATCC BAA-793 / NCIMB 8826 / WCFS1)</name>
    <name type="common">Lactobacillus plantarum</name>
    <dbReference type="NCBI Taxonomy" id="220668"/>
    <lineage>
        <taxon>Bacteria</taxon>
        <taxon>Bacillati</taxon>
        <taxon>Bacillota</taxon>
        <taxon>Bacilli</taxon>
        <taxon>Lactobacillales</taxon>
        <taxon>Lactobacillaceae</taxon>
        <taxon>Lactiplantibacillus</taxon>
    </lineage>
</organism>
<sequence>MTVFEGNTVAAAIAAGLKQLHRTRDQVEVEVIAEAKKGFLGLGKHPAQVRLTVVPASAAPATTPTSATATAQQSVATESTTAPTMPRPTVQTPKSTPTRQAKTSQATTSAAKPATSKAKAVAKPASMAVTTGPVIADTDQSKPATTSKTKSVAADQSQTPRTPAEIAARQAANETAVRALCDYLLAVVKELGVTADLDVDFGNRYATLNFDTTKQGLLIGKHGRTINALQDLAQVYMNHHGASHVNVVLDVDDYRERRAATLKRLAESTAREVIATGKQVFLDPMPSFERKLIHAELANNHHVTTFSEGRDPHRAVVVAIRK</sequence>
<dbReference type="EMBL" id="AL935263">
    <property type="protein sequence ID" value="CCC80632.1"/>
    <property type="molecule type" value="Genomic_DNA"/>
</dbReference>
<dbReference type="RefSeq" id="YP_004891146.1">
    <property type="nucleotide sequence ID" value="NC_004567.2"/>
</dbReference>
<dbReference type="SMR" id="F9ULM5"/>
<dbReference type="STRING" id="220668.lp_3683"/>
<dbReference type="EnsemblBacteria" id="CCC80632">
    <property type="protein sequence ID" value="CCC80632"/>
    <property type="gene ID" value="lp_3683"/>
</dbReference>
<dbReference type="KEGG" id="lpl:lp_3683"/>
<dbReference type="PATRIC" id="fig|220668.9.peg.3076"/>
<dbReference type="eggNOG" id="COG1847">
    <property type="taxonomic scope" value="Bacteria"/>
</dbReference>
<dbReference type="HOGENOM" id="CLU_042512_0_0_9"/>
<dbReference type="OrthoDB" id="9794483at2"/>
<dbReference type="PhylomeDB" id="F9ULM5"/>
<dbReference type="Proteomes" id="UP000000432">
    <property type="component" value="Chromosome"/>
</dbReference>
<dbReference type="GO" id="GO:0005737">
    <property type="term" value="C:cytoplasm"/>
    <property type="evidence" value="ECO:0007669"/>
    <property type="project" value="UniProtKB-SubCell"/>
</dbReference>
<dbReference type="GO" id="GO:0003723">
    <property type="term" value="F:RNA binding"/>
    <property type="evidence" value="ECO:0007669"/>
    <property type="project" value="UniProtKB-UniRule"/>
</dbReference>
<dbReference type="GO" id="GO:0071555">
    <property type="term" value="P:cell wall organization"/>
    <property type="evidence" value="ECO:0007669"/>
    <property type="project" value="UniProtKB-KW"/>
</dbReference>
<dbReference type="GO" id="GO:0009252">
    <property type="term" value="P:peptidoglycan biosynthetic process"/>
    <property type="evidence" value="ECO:0007669"/>
    <property type="project" value="UniProtKB-UniRule"/>
</dbReference>
<dbReference type="GO" id="GO:0008360">
    <property type="term" value="P:regulation of cell shape"/>
    <property type="evidence" value="ECO:0007669"/>
    <property type="project" value="UniProtKB-KW"/>
</dbReference>
<dbReference type="CDD" id="cd02414">
    <property type="entry name" value="KH-II_Jag"/>
    <property type="match status" value="1"/>
</dbReference>
<dbReference type="CDD" id="cd02644">
    <property type="entry name" value="R3H_jag"/>
    <property type="match status" value="1"/>
</dbReference>
<dbReference type="Gene3D" id="3.30.300.20">
    <property type="match status" value="1"/>
</dbReference>
<dbReference type="Gene3D" id="3.30.30.80">
    <property type="entry name" value="probable RNA-binding protein from clostridium symbiosum atcc 14940"/>
    <property type="match status" value="1"/>
</dbReference>
<dbReference type="Gene3D" id="3.30.1370.50">
    <property type="entry name" value="R3H-like domain"/>
    <property type="match status" value="1"/>
</dbReference>
<dbReference type="HAMAP" id="MF_00867">
    <property type="entry name" value="KhpB"/>
    <property type="match status" value="1"/>
</dbReference>
<dbReference type="InterPro" id="IPR038008">
    <property type="entry name" value="Jag_KH"/>
</dbReference>
<dbReference type="InterPro" id="IPR038247">
    <property type="entry name" value="Jag_N_dom_sf"/>
</dbReference>
<dbReference type="InterPro" id="IPR015946">
    <property type="entry name" value="KH_dom-like_a/b"/>
</dbReference>
<dbReference type="InterPro" id="IPR039247">
    <property type="entry name" value="KhpB"/>
</dbReference>
<dbReference type="InterPro" id="IPR032782">
    <property type="entry name" value="KhpB_N"/>
</dbReference>
<dbReference type="InterPro" id="IPR001374">
    <property type="entry name" value="R3H_dom"/>
</dbReference>
<dbReference type="InterPro" id="IPR036867">
    <property type="entry name" value="R3H_dom_sf"/>
</dbReference>
<dbReference type="InterPro" id="IPR034079">
    <property type="entry name" value="R3H_KhpB"/>
</dbReference>
<dbReference type="NCBIfam" id="NF041568">
    <property type="entry name" value="Jag_EloR"/>
    <property type="match status" value="1"/>
</dbReference>
<dbReference type="PANTHER" id="PTHR35800">
    <property type="entry name" value="PROTEIN JAG"/>
    <property type="match status" value="1"/>
</dbReference>
<dbReference type="PANTHER" id="PTHR35800:SF1">
    <property type="entry name" value="RNA-BINDING PROTEIN KHPB"/>
    <property type="match status" value="1"/>
</dbReference>
<dbReference type="Pfam" id="PF14804">
    <property type="entry name" value="Jag_N"/>
    <property type="match status" value="1"/>
</dbReference>
<dbReference type="Pfam" id="PF13083">
    <property type="entry name" value="KH_KhpA-B"/>
    <property type="match status" value="1"/>
</dbReference>
<dbReference type="Pfam" id="PF01424">
    <property type="entry name" value="R3H"/>
    <property type="match status" value="1"/>
</dbReference>
<dbReference type="SMART" id="SM01245">
    <property type="entry name" value="Jag_N"/>
    <property type="match status" value="1"/>
</dbReference>
<dbReference type="SMART" id="SM00393">
    <property type="entry name" value="R3H"/>
    <property type="match status" value="1"/>
</dbReference>
<dbReference type="SUPFAM" id="SSF82708">
    <property type="entry name" value="R3H domain"/>
    <property type="match status" value="1"/>
</dbReference>
<dbReference type="PROSITE" id="PS51061">
    <property type="entry name" value="R3H"/>
    <property type="match status" value="1"/>
</dbReference>